<accession>B3R022</accession>
<gene>
    <name evidence="1" type="primary">truA</name>
    <name type="ordered locus">ATP_00372</name>
</gene>
<feature type="chain" id="PRO_1000194564" description="tRNA pseudouridine synthase A">
    <location>
        <begin position="1"/>
        <end position="244"/>
    </location>
</feature>
<feature type="active site" description="Nucleophile" evidence="1">
    <location>
        <position position="55"/>
    </location>
</feature>
<feature type="binding site" evidence="1">
    <location>
        <position position="113"/>
    </location>
    <ligand>
        <name>substrate</name>
    </ligand>
</feature>
<reference key="1">
    <citation type="journal article" date="2008" name="BMC Genomics">
        <title>The linear chromosome of the plant-pathogenic mycoplasma 'Candidatus Phytoplasma mali'.</title>
        <authorList>
            <person name="Kube M."/>
            <person name="Schneider B."/>
            <person name="Kuhl H."/>
            <person name="Dandekar T."/>
            <person name="Heitmann K."/>
            <person name="Migdoll A.M."/>
            <person name="Reinhardt R."/>
            <person name="Seemueller E."/>
        </authorList>
    </citation>
    <scope>NUCLEOTIDE SEQUENCE [LARGE SCALE GENOMIC DNA]</scope>
    <source>
        <strain>AT</strain>
    </source>
</reference>
<proteinExistence type="inferred from homology"/>
<comment type="function">
    <text evidence="1">Formation of pseudouridine at positions 38, 39 and 40 in the anticodon stem and loop of transfer RNAs.</text>
</comment>
<comment type="catalytic activity">
    <reaction evidence="1">
        <text>uridine(38/39/40) in tRNA = pseudouridine(38/39/40) in tRNA</text>
        <dbReference type="Rhea" id="RHEA:22376"/>
        <dbReference type="Rhea" id="RHEA-COMP:10085"/>
        <dbReference type="Rhea" id="RHEA-COMP:10087"/>
        <dbReference type="ChEBI" id="CHEBI:65314"/>
        <dbReference type="ChEBI" id="CHEBI:65315"/>
        <dbReference type="EC" id="5.4.99.12"/>
    </reaction>
</comment>
<comment type="subunit">
    <text evidence="1">Homodimer.</text>
</comment>
<comment type="similarity">
    <text evidence="1">Belongs to the tRNA pseudouridine synthase TruA family.</text>
</comment>
<dbReference type="EC" id="5.4.99.12" evidence="1"/>
<dbReference type="EMBL" id="CU469464">
    <property type="protein sequence ID" value="CAP18559.1"/>
    <property type="molecule type" value="Genomic_DNA"/>
</dbReference>
<dbReference type="SMR" id="B3R022"/>
<dbReference type="STRING" id="37692.ATP_00372"/>
<dbReference type="KEGG" id="pml:ATP_00372"/>
<dbReference type="eggNOG" id="COG0101">
    <property type="taxonomic scope" value="Bacteria"/>
</dbReference>
<dbReference type="HOGENOM" id="CLU_014673_0_1_14"/>
<dbReference type="Proteomes" id="UP000002020">
    <property type="component" value="Chromosome"/>
</dbReference>
<dbReference type="GO" id="GO:0003723">
    <property type="term" value="F:RNA binding"/>
    <property type="evidence" value="ECO:0007669"/>
    <property type="project" value="InterPro"/>
</dbReference>
<dbReference type="GO" id="GO:0160147">
    <property type="term" value="F:tRNA pseudouridine(38-40) synthase activity"/>
    <property type="evidence" value="ECO:0007669"/>
    <property type="project" value="UniProtKB-EC"/>
</dbReference>
<dbReference type="GO" id="GO:0031119">
    <property type="term" value="P:tRNA pseudouridine synthesis"/>
    <property type="evidence" value="ECO:0007669"/>
    <property type="project" value="UniProtKB-UniRule"/>
</dbReference>
<dbReference type="CDD" id="cd02570">
    <property type="entry name" value="PseudoU_synth_EcTruA"/>
    <property type="match status" value="1"/>
</dbReference>
<dbReference type="FunFam" id="3.30.70.580:FF:000001">
    <property type="entry name" value="tRNA pseudouridine synthase A"/>
    <property type="match status" value="1"/>
</dbReference>
<dbReference type="Gene3D" id="3.30.70.660">
    <property type="entry name" value="Pseudouridine synthase I, catalytic domain, C-terminal subdomain"/>
    <property type="match status" value="1"/>
</dbReference>
<dbReference type="Gene3D" id="3.30.70.580">
    <property type="entry name" value="Pseudouridine synthase I, catalytic domain, N-terminal subdomain"/>
    <property type="match status" value="1"/>
</dbReference>
<dbReference type="HAMAP" id="MF_00171">
    <property type="entry name" value="TruA"/>
    <property type="match status" value="1"/>
</dbReference>
<dbReference type="InterPro" id="IPR020103">
    <property type="entry name" value="PsdUridine_synth_cat_dom_sf"/>
</dbReference>
<dbReference type="InterPro" id="IPR001406">
    <property type="entry name" value="PsdUridine_synth_TruA"/>
</dbReference>
<dbReference type="InterPro" id="IPR020097">
    <property type="entry name" value="PsdUridine_synth_TruA_a/b_dom"/>
</dbReference>
<dbReference type="InterPro" id="IPR020095">
    <property type="entry name" value="PsdUridine_synth_TruA_C"/>
</dbReference>
<dbReference type="InterPro" id="IPR020094">
    <property type="entry name" value="TruA/RsuA/RluB/E/F_N"/>
</dbReference>
<dbReference type="NCBIfam" id="TIGR00071">
    <property type="entry name" value="hisT_truA"/>
    <property type="match status" value="1"/>
</dbReference>
<dbReference type="PANTHER" id="PTHR11142">
    <property type="entry name" value="PSEUDOURIDYLATE SYNTHASE"/>
    <property type="match status" value="1"/>
</dbReference>
<dbReference type="PANTHER" id="PTHR11142:SF0">
    <property type="entry name" value="TRNA PSEUDOURIDINE SYNTHASE-LIKE 1"/>
    <property type="match status" value="1"/>
</dbReference>
<dbReference type="Pfam" id="PF01416">
    <property type="entry name" value="PseudoU_synth_1"/>
    <property type="match status" value="2"/>
</dbReference>
<dbReference type="PIRSF" id="PIRSF001430">
    <property type="entry name" value="tRNA_psdUrid_synth"/>
    <property type="match status" value="1"/>
</dbReference>
<dbReference type="SUPFAM" id="SSF55120">
    <property type="entry name" value="Pseudouridine synthase"/>
    <property type="match status" value="1"/>
</dbReference>
<sequence length="244" mass="28904">MKDFNYKLVLSYDGTNYYGFQKQLHLNTIQSVLENVLNKITKQKKIKIYGASRTDKGVHASGQVVHFQLPFLIPNDHFQKILNFCLPSDIQITKIILISKEFHCRFQAKSKIYHYVFSKKKLNVFNYRFQVYIPNMDFNKIKEAILFIEGKHDFSLFTSQKSLKNYQRIIFKAFIKETKQKYFLIIHGNSFIQHMIRFLVGFLIEIAQNKKTLSEFKQMLDLKINQKARLLAPAKGLILKKIFY</sequence>
<organism>
    <name type="scientific">Phytoplasma mali (strain AT)</name>
    <dbReference type="NCBI Taxonomy" id="482235"/>
    <lineage>
        <taxon>Bacteria</taxon>
        <taxon>Bacillati</taxon>
        <taxon>Mycoplasmatota</taxon>
        <taxon>Mollicutes</taxon>
        <taxon>Acholeplasmatales</taxon>
        <taxon>Acholeplasmataceae</taxon>
        <taxon>Candidatus Phytoplasma</taxon>
        <taxon>16SrX (Apple proliferation group)</taxon>
    </lineage>
</organism>
<evidence type="ECO:0000255" key="1">
    <source>
        <dbReference type="HAMAP-Rule" id="MF_00171"/>
    </source>
</evidence>
<keyword id="KW-0413">Isomerase</keyword>
<keyword id="KW-1185">Reference proteome</keyword>
<keyword id="KW-0819">tRNA processing</keyword>
<protein>
    <recommendedName>
        <fullName evidence="1">tRNA pseudouridine synthase A</fullName>
        <ecNumber evidence="1">5.4.99.12</ecNumber>
    </recommendedName>
    <alternativeName>
        <fullName evidence="1">tRNA pseudouridine(38-40) synthase</fullName>
    </alternativeName>
    <alternativeName>
        <fullName evidence="1">tRNA pseudouridylate synthase I</fullName>
    </alternativeName>
    <alternativeName>
        <fullName evidence="1">tRNA-uridine isomerase I</fullName>
    </alternativeName>
</protein>
<name>TRUA_PHYMT</name>